<dbReference type="EC" id="4.2.1.19" evidence="1"/>
<dbReference type="EMBL" id="CP000148">
    <property type="protein sequence ID" value="ABB30629.1"/>
    <property type="molecule type" value="Genomic_DNA"/>
</dbReference>
<dbReference type="RefSeq" id="WP_004512358.1">
    <property type="nucleotide sequence ID" value="NC_007517.1"/>
</dbReference>
<dbReference type="SMR" id="Q39YP5"/>
<dbReference type="STRING" id="269799.Gmet_0386"/>
<dbReference type="KEGG" id="gme:Gmet_0386"/>
<dbReference type="eggNOG" id="COG0131">
    <property type="taxonomic scope" value="Bacteria"/>
</dbReference>
<dbReference type="HOGENOM" id="CLU_044308_2_0_7"/>
<dbReference type="UniPathway" id="UPA00031">
    <property type="reaction ID" value="UER00011"/>
</dbReference>
<dbReference type="Proteomes" id="UP000007073">
    <property type="component" value="Chromosome"/>
</dbReference>
<dbReference type="GO" id="GO:0005737">
    <property type="term" value="C:cytoplasm"/>
    <property type="evidence" value="ECO:0007669"/>
    <property type="project" value="UniProtKB-SubCell"/>
</dbReference>
<dbReference type="GO" id="GO:0004424">
    <property type="term" value="F:imidazoleglycerol-phosphate dehydratase activity"/>
    <property type="evidence" value="ECO:0007669"/>
    <property type="project" value="UniProtKB-UniRule"/>
</dbReference>
<dbReference type="GO" id="GO:0000105">
    <property type="term" value="P:L-histidine biosynthetic process"/>
    <property type="evidence" value="ECO:0007669"/>
    <property type="project" value="UniProtKB-UniRule"/>
</dbReference>
<dbReference type="CDD" id="cd07914">
    <property type="entry name" value="IGPD"/>
    <property type="match status" value="1"/>
</dbReference>
<dbReference type="FunFam" id="3.30.230.40:FF:000001">
    <property type="entry name" value="Imidazoleglycerol-phosphate dehydratase HisB"/>
    <property type="match status" value="1"/>
</dbReference>
<dbReference type="FunFam" id="3.30.230.40:FF:000003">
    <property type="entry name" value="Imidazoleglycerol-phosphate dehydratase HisB"/>
    <property type="match status" value="1"/>
</dbReference>
<dbReference type="Gene3D" id="3.30.230.40">
    <property type="entry name" value="Imidazole glycerol phosphate dehydratase, domain 1"/>
    <property type="match status" value="2"/>
</dbReference>
<dbReference type="HAMAP" id="MF_00076">
    <property type="entry name" value="HisB"/>
    <property type="match status" value="1"/>
</dbReference>
<dbReference type="InterPro" id="IPR038494">
    <property type="entry name" value="IGPD_sf"/>
</dbReference>
<dbReference type="InterPro" id="IPR000807">
    <property type="entry name" value="ImidazoleglycerolP_deHydtase"/>
</dbReference>
<dbReference type="InterPro" id="IPR020565">
    <property type="entry name" value="ImidazoleglycerP_deHydtase_CS"/>
</dbReference>
<dbReference type="InterPro" id="IPR020568">
    <property type="entry name" value="Ribosomal_Su5_D2-typ_SF"/>
</dbReference>
<dbReference type="NCBIfam" id="NF002107">
    <property type="entry name" value="PRK00951.1-2"/>
    <property type="match status" value="1"/>
</dbReference>
<dbReference type="NCBIfam" id="NF002109">
    <property type="entry name" value="PRK00951.1-5"/>
    <property type="match status" value="1"/>
</dbReference>
<dbReference type="NCBIfam" id="NF002111">
    <property type="entry name" value="PRK00951.2-1"/>
    <property type="match status" value="1"/>
</dbReference>
<dbReference type="NCBIfam" id="NF002114">
    <property type="entry name" value="PRK00951.2-4"/>
    <property type="match status" value="1"/>
</dbReference>
<dbReference type="NCBIfam" id="NF002115">
    <property type="entry name" value="PRK00951.2-5"/>
    <property type="match status" value="1"/>
</dbReference>
<dbReference type="PANTHER" id="PTHR23133:SF2">
    <property type="entry name" value="IMIDAZOLEGLYCEROL-PHOSPHATE DEHYDRATASE"/>
    <property type="match status" value="1"/>
</dbReference>
<dbReference type="PANTHER" id="PTHR23133">
    <property type="entry name" value="IMIDAZOLEGLYCEROL-PHOSPHATE DEHYDRATASE HIS7"/>
    <property type="match status" value="1"/>
</dbReference>
<dbReference type="Pfam" id="PF00475">
    <property type="entry name" value="IGPD"/>
    <property type="match status" value="1"/>
</dbReference>
<dbReference type="SUPFAM" id="SSF54211">
    <property type="entry name" value="Ribosomal protein S5 domain 2-like"/>
    <property type="match status" value="2"/>
</dbReference>
<dbReference type="PROSITE" id="PS00954">
    <property type="entry name" value="IGP_DEHYDRATASE_1"/>
    <property type="match status" value="1"/>
</dbReference>
<dbReference type="PROSITE" id="PS00955">
    <property type="entry name" value="IGP_DEHYDRATASE_2"/>
    <property type="match status" value="1"/>
</dbReference>
<sequence length="195" mass="21577">MSRKATIERVTKETQIKLSLEIDGAGEAKICTSVPFLDHMLDLFARHGLFNLQVDARGDIDIDFHHTVEDIGIVLGQALKEALGDKKGIRRYGQASVPMDETLASVAVDISGRPYLVYHVALPKVKIGEFDVELVREFFQAVVNNLGANIHVNVMYGDNVHHMVEACFKAFARAMDQATQVDPRIEGVMSTKGKL</sequence>
<feature type="chain" id="PRO_1000010280" description="Imidazoleglycerol-phosphate dehydratase">
    <location>
        <begin position="1"/>
        <end position="195"/>
    </location>
</feature>
<accession>Q39YP5</accession>
<comment type="catalytic activity">
    <reaction evidence="1">
        <text>D-erythro-1-(imidazol-4-yl)glycerol 3-phosphate = 3-(imidazol-4-yl)-2-oxopropyl phosphate + H2O</text>
        <dbReference type="Rhea" id="RHEA:11040"/>
        <dbReference type="ChEBI" id="CHEBI:15377"/>
        <dbReference type="ChEBI" id="CHEBI:57766"/>
        <dbReference type="ChEBI" id="CHEBI:58278"/>
        <dbReference type="EC" id="4.2.1.19"/>
    </reaction>
</comment>
<comment type="pathway">
    <text evidence="1">Amino-acid biosynthesis; L-histidine biosynthesis; L-histidine from 5-phospho-alpha-D-ribose 1-diphosphate: step 6/9.</text>
</comment>
<comment type="subcellular location">
    <subcellularLocation>
        <location evidence="1">Cytoplasm</location>
    </subcellularLocation>
</comment>
<comment type="similarity">
    <text evidence="1">Belongs to the imidazoleglycerol-phosphate dehydratase family.</text>
</comment>
<reference key="1">
    <citation type="journal article" date="2009" name="BMC Microbiol.">
        <title>The genome sequence of Geobacter metallireducens: features of metabolism, physiology and regulation common and dissimilar to Geobacter sulfurreducens.</title>
        <authorList>
            <person name="Aklujkar M."/>
            <person name="Krushkal J."/>
            <person name="DiBartolo G."/>
            <person name="Lapidus A."/>
            <person name="Land M.L."/>
            <person name="Lovley D.R."/>
        </authorList>
    </citation>
    <scope>NUCLEOTIDE SEQUENCE [LARGE SCALE GENOMIC DNA]</scope>
    <source>
        <strain>ATCC 53774 / DSM 7210 / GS-15</strain>
    </source>
</reference>
<proteinExistence type="inferred from homology"/>
<name>HIS7_GEOMG</name>
<evidence type="ECO:0000255" key="1">
    <source>
        <dbReference type="HAMAP-Rule" id="MF_00076"/>
    </source>
</evidence>
<gene>
    <name evidence="1" type="primary">hisB</name>
    <name type="ordered locus">Gmet_0386</name>
</gene>
<keyword id="KW-0028">Amino-acid biosynthesis</keyword>
<keyword id="KW-0963">Cytoplasm</keyword>
<keyword id="KW-0368">Histidine biosynthesis</keyword>
<keyword id="KW-0456">Lyase</keyword>
<keyword id="KW-1185">Reference proteome</keyword>
<protein>
    <recommendedName>
        <fullName evidence="1">Imidazoleglycerol-phosphate dehydratase</fullName>
        <shortName evidence="1">IGPD</shortName>
        <ecNumber evidence="1">4.2.1.19</ecNumber>
    </recommendedName>
</protein>
<organism>
    <name type="scientific">Geobacter metallireducens (strain ATCC 53774 / DSM 7210 / GS-15)</name>
    <dbReference type="NCBI Taxonomy" id="269799"/>
    <lineage>
        <taxon>Bacteria</taxon>
        <taxon>Pseudomonadati</taxon>
        <taxon>Thermodesulfobacteriota</taxon>
        <taxon>Desulfuromonadia</taxon>
        <taxon>Geobacterales</taxon>
        <taxon>Geobacteraceae</taxon>
        <taxon>Geobacter</taxon>
    </lineage>
</organism>